<evidence type="ECO:0000255" key="1">
    <source>
        <dbReference type="HAMAP-Rule" id="MF_01322"/>
    </source>
</evidence>
<protein>
    <recommendedName>
        <fullName evidence="1">DNA-directed RNA polymerase subunit beta'</fullName>
        <shortName evidence="1">RNAP subunit beta'</shortName>
        <ecNumber evidence="1">2.7.7.6</ecNumber>
    </recommendedName>
    <alternativeName>
        <fullName evidence="1">RNA polymerase subunit beta'</fullName>
    </alternativeName>
    <alternativeName>
        <fullName evidence="1">Transcriptase subunit beta'</fullName>
    </alternativeName>
</protein>
<proteinExistence type="inferred from homology"/>
<name>RPOC_PSEPK</name>
<accession>Q88QP1</accession>
<keyword id="KW-0240">DNA-directed RNA polymerase</keyword>
<keyword id="KW-0460">Magnesium</keyword>
<keyword id="KW-0479">Metal-binding</keyword>
<keyword id="KW-0548">Nucleotidyltransferase</keyword>
<keyword id="KW-1185">Reference proteome</keyword>
<keyword id="KW-0804">Transcription</keyword>
<keyword id="KW-0808">Transferase</keyword>
<keyword id="KW-0862">Zinc</keyword>
<gene>
    <name evidence="1" type="primary">rpoC</name>
    <name type="ordered locus">PP_0448</name>
</gene>
<comment type="function">
    <text evidence="1">DNA-dependent RNA polymerase catalyzes the transcription of DNA into RNA using the four ribonucleoside triphosphates as substrates.</text>
</comment>
<comment type="catalytic activity">
    <reaction evidence="1">
        <text>RNA(n) + a ribonucleoside 5'-triphosphate = RNA(n+1) + diphosphate</text>
        <dbReference type="Rhea" id="RHEA:21248"/>
        <dbReference type="Rhea" id="RHEA-COMP:14527"/>
        <dbReference type="Rhea" id="RHEA-COMP:17342"/>
        <dbReference type="ChEBI" id="CHEBI:33019"/>
        <dbReference type="ChEBI" id="CHEBI:61557"/>
        <dbReference type="ChEBI" id="CHEBI:140395"/>
        <dbReference type="EC" id="2.7.7.6"/>
    </reaction>
</comment>
<comment type="cofactor">
    <cofactor evidence="1">
        <name>Mg(2+)</name>
        <dbReference type="ChEBI" id="CHEBI:18420"/>
    </cofactor>
    <text evidence="1">Binds 1 Mg(2+) ion per subunit.</text>
</comment>
<comment type="cofactor">
    <cofactor evidence="1">
        <name>Zn(2+)</name>
        <dbReference type="ChEBI" id="CHEBI:29105"/>
    </cofactor>
    <text evidence="1">Binds 2 Zn(2+) ions per subunit.</text>
</comment>
<comment type="subunit">
    <text evidence="1">The RNAP catalytic core consists of 2 alpha, 1 beta, 1 beta' and 1 omega subunit. When a sigma factor is associated with the core the holoenzyme is formed, which can initiate transcription.</text>
</comment>
<comment type="similarity">
    <text evidence="1">Belongs to the RNA polymerase beta' chain family.</text>
</comment>
<reference key="1">
    <citation type="journal article" date="2002" name="Environ. Microbiol.">
        <title>Complete genome sequence and comparative analysis of the metabolically versatile Pseudomonas putida KT2440.</title>
        <authorList>
            <person name="Nelson K.E."/>
            <person name="Weinel C."/>
            <person name="Paulsen I.T."/>
            <person name="Dodson R.J."/>
            <person name="Hilbert H."/>
            <person name="Martins dos Santos V.A.P."/>
            <person name="Fouts D.E."/>
            <person name="Gill S.R."/>
            <person name="Pop M."/>
            <person name="Holmes M."/>
            <person name="Brinkac L.M."/>
            <person name="Beanan M.J."/>
            <person name="DeBoy R.T."/>
            <person name="Daugherty S.C."/>
            <person name="Kolonay J.F."/>
            <person name="Madupu R."/>
            <person name="Nelson W.C."/>
            <person name="White O."/>
            <person name="Peterson J.D."/>
            <person name="Khouri H.M."/>
            <person name="Hance I."/>
            <person name="Chris Lee P."/>
            <person name="Holtzapple E.K."/>
            <person name="Scanlan D."/>
            <person name="Tran K."/>
            <person name="Moazzez A."/>
            <person name="Utterback T.R."/>
            <person name="Rizzo M."/>
            <person name="Lee K."/>
            <person name="Kosack D."/>
            <person name="Moestl D."/>
            <person name="Wedler H."/>
            <person name="Lauber J."/>
            <person name="Stjepandic D."/>
            <person name="Hoheisel J."/>
            <person name="Straetz M."/>
            <person name="Heim S."/>
            <person name="Kiewitz C."/>
            <person name="Eisen J.A."/>
            <person name="Timmis K.N."/>
            <person name="Duesterhoeft A."/>
            <person name="Tuemmler B."/>
            <person name="Fraser C.M."/>
        </authorList>
    </citation>
    <scope>NUCLEOTIDE SEQUENCE [LARGE SCALE GENOMIC DNA]</scope>
    <source>
        <strain>ATCC 47054 / DSM 6125 / CFBP 8728 / NCIMB 11950 / KT2440</strain>
    </source>
</reference>
<sequence>MKDLLNLLKNQGQVEEFDAIRIGLASPEMIRSWSFGEVKKPETINYRTFKPERDGLFCAKIFGPVKDYECLCGKYKRLKHRGVICEKCGVEVALAKVRRERMAHIELASPVAHIWFLKSLPSRIGLLMDMTLRDIERVLYFESYVVIDPGMTTLEKGQLLNDEQYFEALEEFGDDFDARMGAEAVRELLHAIDLEHEIGRLREEIPQTNSETKIKKLSKRLKLMEAFQGSGNLPEWMVLTVLPVLPPDLRPLVPLDGGRFATSDLNDLYRRVINRNNRLKRLLDLSAPDIIVRNEKRMLQEAVDALLDNGRRGRAITGSNKRPLKSLADMIKGKQGRFRQNLLGKRVDYSGRSVITVGPTLRLHQCGLPKKMALELFKPFIFGKLEMRGLATTIKAAKKMVERELPEVWDVLAEVIREHPVLLNRAPTLHRLGIQAFEPVLIEGKAIQLHPLVCAAYNADFDGDQMAVHVPLTLEAQLEARALMMSTNNILSPANGEPIIVPSQDVVLGLYYMTREAINAKGEGRVFADLQEVDRVFRAGEAALHAKIKVRINETVKERDGSVVKNTRIVDTTVGRALLFQVVPAGLPYDVVNQPMKKKAISKLINQCYRVVGLKETVIFADQLMYTGFAYSTISGVSIGVNDFVIPDEKARIIGNATDEVKEIESQYASGLVTQGEKYNKVIDLWSKANDEVSKAMMANLSKEKVIDREGKEVEQESFNSMYMMADSGARGSAAQIRQLAGMRGLMAKPDGSIIETPITANFREGLSVLQYFISTHGARKGLADTALKTANSGYLTRRLVDVAQDLVVTEIDCGTDQGLVMTPHIEGGDVVEPLGERVLGRVIARDVFKPGTEDVIVPAGTLVDEQWVEFIELNSIDEVIVRSPINCETRYGICAKCYGRDLARGHQVNIGEAVGVIAAQSIGEPGTQLTMRTFHIGGAASRTSAADSVQVKNGGMVRLHNLKQVERADGNLVAVSRSGELAIADEFGRERERYKLPYGAVISVKEGEKVEAGAIVAKWDPHTHPIVTELKGTVTFVGMEENITIKRQTDELTGLTNIEVLDVKDRPAAGKEIRPAIKMVDAAGKDLYLPGTDVPAQYFLPANALVGVADGAQIGVGDVIARIPQETSKTRDITGGLPRVADLFEARRPKEASILAEVSGTIAFGKETKGKRRLVITPTDGSEPYEELIPKWRHLNVFEGEQVNRGEVISDGPSDPHDILRLLGVSALAKYIVNEIQDVYRLQGVKINDKHIETILRQMLRKVEISESGDSSFIKGDQMELTQVLVENERLASEDKFISKFTRVLLGITKASLSTESFISAASFQETTRVLTEAAVTGKRDYLRGLKENVVVGRLIPAGTGLAYHSERKRRRDADKPLRVSASEVEAALTEALNSSGN</sequence>
<feature type="chain" id="PRO_0000067778" description="DNA-directed RNA polymerase subunit beta'">
    <location>
        <begin position="1"/>
        <end position="1399"/>
    </location>
</feature>
<feature type="binding site" evidence="1">
    <location>
        <position position="70"/>
    </location>
    <ligand>
        <name>Zn(2+)</name>
        <dbReference type="ChEBI" id="CHEBI:29105"/>
        <label>1</label>
    </ligand>
</feature>
<feature type="binding site" evidence="1">
    <location>
        <position position="72"/>
    </location>
    <ligand>
        <name>Zn(2+)</name>
        <dbReference type="ChEBI" id="CHEBI:29105"/>
        <label>1</label>
    </ligand>
</feature>
<feature type="binding site" evidence="1">
    <location>
        <position position="85"/>
    </location>
    <ligand>
        <name>Zn(2+)</name>
        <dbReference type="ChEBI" id="CHEBI:29105"/>
        <label>1</label>
    </ligand>
</feature>
<feature type="binding site" evidence="1">
    <location>
        <position position="88"/>
    </location>
    <ligand>
        <name>Zn(2+)</name>
        <dbReference type="ChEBI" id="CHEBI:29105"/>
        <label>1</label>
    </ligand>
</feature>
<feature type="binding site" evidence="1">
    <location>
        <position position="460"/>
    </location>
    <ligand>
        <name>Mg(2+)</name>
        <dbReference type="ChEBI" id="CHEBI:18420"/>
    </ligand>
</feature>
<feature type="binding site" evidence="1">
    <location>
        <position position="462"/>
    </location>
    <ligand>
        <name>Mg(2+)</name>
        <dbReference type="ChEBI" id="CHEBI:18420"/>
    </ligand>
</feature>
<feature type="binding site" evidence="1">
    <location>
        <position position="464"/>
    </location>
    <ligand>
        <name>Mg(2+)</name>
        <dbReference type="ChEBI" id="CHEBI:18420"/>
    </ligand>
</feature>
<feature type="binding site" evidence="1">
    <location>
        <position position="814"/>
    </location>
    <ligand>
        <name>Zn(2+)</name>
        <dbReference type="ChEBI" id="CHEBI:29105"/>
        <label>2</label>
    </ligand>
</feature>
<feature type="binding site" evidence="1">
    <location>
        <position position="888"/>
    </location>
    <ligand>
        <name>Zn(2+)</name>
        <dbReference type="ChEBI" id="CHEBI:29105"/>
        <label>2</label>
    </ligand>
</feature>
<feature type="binding site" evidence="1">
    <location>
        <position position="895"/>
    </location>
    <ligand>
        <name>Zn(2+)</name>
        <dbReference type="ChEBI" id="CHEBI:29105"/>
        <label>2</label>
    </ligand>
</feature>
<feature type="binding site" evidence="1">
    <location>
        <position position="898"/>
    </location>
    <ligand>
        <name>Zn(2+)</name>
        <dbReference type="ChEBI" id="CHEBI:29105"/>
        <label>2</label>
    </ligand>
</feature>
<dbReference type="EC" id="2.7.7.6" evidence="1"/>
<dbReference type="EMBL" id="AE015451">
    <property type="protein sequence ID" value="AAN66078.1"/>
    <property type="molecule type" value="Genomic_DNA"/>
</dbReference>
<dbReference type="RefSeq" id="NP_742614.1">
    <property type="nucleotide sequence ID" value="NC_002947.4"/>
</dbReference>
<dbReference type="RefSeq" id="WP_010951774.1">
    <property type="nucleotide sequence ID" value="NZ_CP169744.1"/>
</dbReference>
<dbReference type="SMR" id="Q88QP1"/>
<dbReference type="STRING" id="160488.PP_0448"/>
<dbReference type="PaxDb" id="160488-PP_0448"/>
<dbReference type="GeneID" id="83677746"/>
<dbReference type="KEGG" id="ppu:PP_0448"/>
<dbReference type="PATRIC" id="fig|160488.4.peg.480"/>
<dbReference type="eggNOG" id="COG0086">
    <property type="taxonomic scope" value="Bacteria"/>
</dbReference>
<dbReference type="HOGENOM" id="CLU_000524_3_1_6"/>
<dbReference type="OrthoDB" id="9815296at2"/>
<dbReference type="PhylomeDB" id="Q88QP1"/>
<dbReference type="BioCyc" id="PPUT160488:G1G01-493-MONOMER"/>
<dbReference type="Proteomes" id="UP000000556">
    <property type="component" value="Chromosome"/>
</dbReference>
<dbReference type="GO" id="GO:0000428">
    <property type="term" value="C:DNA-directed RNA polymerase complex"/>
    <property type="evidence" value="ECO:0007669"/>
    <property type="project" value="UniProtKB-KW"/>
</dbReference>
<dbReference type="GO" id="GO:0003677">
    <property type="term" value="F:DNA binding"/>
    <property type="evidence" value="ECO:0007669"/>
    <property type="project" value="UniProtKB-UniRule"/>
</dbReference>
<dbReference type="GO" id="GO:0003899">
    <property type="term" value="F:DNA-directed RNA polymerase activity"/>
    <property type="evidence" value="ECO:0007669"/>
    <property type="project" value="UniProtKB-UniRule"/>
</dbReference>
<dbReference type="GO" id="GO:0000287">
    <property type="term" value="F:magnesium ion binding"/>
    <property type="evidence" value="ECO:0007669"/>
    <property type="project" value="UniProtKB-UniRule"/>
</dbReference>
<dbReference type="GO" id="GO:0008270">
    <property type="term" value="F:zinc ion binding"/>
    <property type="evidence" value="ECO:0007669"/>
    <property type="project" value="UniProtKB-UniRule"/>
</dbReference>
<dbReference type="GO" id="GO:0006351">
    <property type="term" value="P:DNA-templated transcription"/>
    <property type="evidence" value="ECO:0007669"/>
    <property type="project" value="UniProtKB-UniRule"/>
</dbReference>
<dbReference type="CDD" id="cd02655">
    <property type="entry name" value="RNAP_beta'_C"/>
    <property type="match status" value="1"/>
</dbReference>
<dbReference type="CDD" id="cd01609">
    <property type="entry name" value="RNAP_beta'_N"/>
    <property type="match status" value="1"/>
</dbReference>
<dbReference type="FunFam" id="1.10.132.30:FF:000003">
    <property type="entry name" value="DNA-directed RNA polymerase subunit beta"/>
    <property type="match status" value="1"/>
</dbReference>
<dbReference type="FunFam" id="1.10.150.390:FF:000002">
    <property type="entry name" value="DNA-directed RNA polymerase subunit beta"/>
    <property type="match status" value="1"/>
</dbReference>
<dbReference type="FunFam" id="1.10.40.90:FF:000001">
    <property type="entry name" value="DNA-directed RNA polymerase subunit beta"/>
    <property type="match status" value="1"/>
</dbReference>
<dbReference type="FunFam" id="4.10.860.120:FF:000001">
    <property type="entry name" value="DNA-directed RNA polymerase subunit beta"/>
    <property type="match status" value="1"/>
</dbReference>
<dbReference type="Gene3D" id="1.10.132.30">
    <property type="match status" value="1"/>
</dbReference>
<dbReference type="Gene3D" id="1.10.150.390">
    <property type="match status" value="1"/>
</dbReference>
<dbReference type="Gene3D" id="1.10.1790.20">
    <property type="match status" value="1"/>
</dbReference>
<dbReference type="Gene3D" id="1.10.40.90">
    <property type="match status" value="1"/>
</dbReference>
<dbReference type="Gene3D" id="2.40.40.20">
    <property type="match status" value="1"/>
</dbReference>
<dbReference type="Gene3D" id="2.40.50.100">
    <property type="match status" value="3"/>
</dbReference>
<dbReference type="Gene3D" id="4.10.860.120">
    <property type="entry name" value="RNA polymerase II, clamp domain"/>
    <property type="match status" value="1"/>
</dbReference>
<dbReference type="Gene3D" id="1.10.274.100">
    <property type="entry name" value="RNA polymerase Rpb1, domain 3"/>
    <property type="match status" value="2"/>
</dbReference>
<dbReference type="HAMAP" id="MF_01322">
    <property type="entry name" value="RNApol_bact_RpoC"/>
    <property type="match status" value="1"/>
</dbReference>
<dbReference type="InterPro" id="IPR045867">
    <property type="entry name" value="DNA-dir_RpoC_beta_prime"/>
</dbReference>
<dbReference type="InterPro" id="IPR012754">
    <property type="entry name" value="DNA-dir_RpoC_beta_prime_bact"/>
</dbReference>
<dbReference type="InterPro" id="IPR000722">
    <property type="entry name" value="RNA_pol_asu"/>
</dbReference>
<dbReference type="InterPro" id="IPR006592">
    <property type="entry name" value="RNA_pol_N"/>
</dbReference>
<dbReference type="InterPro" id="IPR007080">
    <property type="entry name" value="RNA_pol_Rpb1_1"/>
</dbReference>
<dbReference type="InterPro" id="IPR007066">
    <property type="entry name" value="RNA_pol_Rpb1_3"/>
</dbReference>
<dbReference type="InterPro" id="IPR042102">
    <property type="entry name" value="RNA_pol_Rpb1_3_sf"/>
</dbReference>
<dbReference type="InterPro" id="IPR007083">
    <property type="entry name" value="RNA_pol_Rpb1_4"/>
</dbReference>
<dbReference type="InterPro" id="IPR007081">
    <property type="entry name" value="RNA_pol_Rpb1_5"/>
</dbReference>
<dbReference type="InterPro" id="IPR044893">
    <property type="entry name" value="RNA_pol_Rpb1_clamp_domain"/>
</dbReference>
<dbReference type="InterPro" id="IPR038120">
    <property type="entry name" value="Rpb1_funnel_sf"/>
</dbReference>
<dbReference type="NCBIfam" id="TIGR02386">
    <property type="entry name" value="rpoC_TIGR"/>
    <property type="match status" value="1"/>
</dbReference>
<dbReference type="PANTHER" id="PTHR19376">
    <property type="entry name" value="DNA-DIRECTED RNA POLYMERASE"/>
    <property type="match status" value="1"/>
</dbReference>
<dbReference type="PANTHER" id="PTHR19376:SF54">
    <property type="entry name" value="DNA-DIRECTED RNA POLYMERASE SUBUNIT BETA"/>
    <property type="match status" value="1"/>
</dbReference>
<dbReference type="Pfam" id="PF04997">
    <property type="entry name" value="RNA_pol_Rpb1_1"/>
    <property type="match status" value="1"/>
</dbReference>
<dbReference type="Pfam" id="PF00623">
    <property type="entry name" value="RNA_pol_Rpb1_2"/>
    <property type="match status" value="2"/>
</dbReference>
<dbReference type="Pfam" id="PF04983">
    <property type="entry name" value="RNA_pol_Rpb1_3"/>
    <property type="match status" value="1"/>
</dbReference>
<dbReference type="Pfam" id="PF05000">
    <property type="entry name" value="RNA_pol_Rpb1_4"/>
    <property type="match status" value="1"/>
</dbReference>
<dbReference type="Pfam" id="PF04998">
    <property type="entry name" value="RNA_pol_Rpb1_5"/>
    <property type="match status" value="1"/>
</dbReference>
<dbReference type="SMART" id="SM00663">
    <property type="entry name" value="RPOLA_N"/>
    <property type="match status" value="1"/>
</dbReference>
<dbReference type="SUPFAM" id="SSF64484">
    <property type="entry name" value="beta and beta-prime subunits of DNA dependent RNA-polymerase"/>
    <property type="match status" value="1"/>
</dbReference>
<organism>
    <name type="scientific">Pseudomonas putida (strain ATCC 47054 / DSM 6125 / CFBP 8728 / NCIMB 11950 / KT2440)</name>
    <dbReference type="NCBI Taxonomy" id="160488"/>
    <lineage>
        <taxon>Bacteria</taxon>
        <taxon>Pseudomonadati</taxon>
        <taxon>Pseudomonadota</taxon>
        <taxon>Gammaproteobacteria</taxon>
        <taxon>Pseudomonadales</taxon>
        <taxon>Pseudomonadaceae</taxon>
        <taxon>Pseudomonas</taxon>
    </lineage>
</organism>